<feature type="chain" id="PRO_0000282478" description="Pre-mRNA-splicing ATP-dependent RNA helicase prp28">
    <location>
        <begin position="1"/>
        <end position="798"/>
    </location>
</feature>
<feature type="domain" description="Helicase ATP-binding" evidence="2">
    <location>
        <begin position="397"/>
        <end position="597"/>
    </location>
</feature>
<feature type="domain" description="Helicase C-terminal" evidence="3">
    <location>
        <begin position="608"/>
        <end position="771"/>
    </location>
</feature>
<feature type="region of interest" description="Disordered" evidence="4">
    <location>
        <begin position="1"/>
        <end position="79"/>
    </location>
</feature>
<feature type="region of interest" description="Disordered" evidence="4">
    <location>
        <begin position="112"/>
        <end position="212"/>
    </location>
</feature>
<feature type="region of interest" description="Disordered" evidence="4">
    <location>
        <begin position="761"/>
        <end position="798"/>
    </location>
</feature>
<feature type="short sequence motif" description="Q motif">
    <location>
        <begin position="366"/>
        <end position="394"/>
    </location>
</feature>
<feature type="short sequence motif" description="DEAD box">
    <location>
        <begin position="525"/>
        <end position="528"/>
    </location>
</feature>
<feature type="compositionally biased region" description="Pro residues" evidence="4">
    <location>
        <begin position="15"/>
        <end position="60"/>
    </location>
</feature>
<feature type="compositionally biased region" description="Basic and acidic residues" evidence="4">
    <location>
        <begin position="112"/>
        <end position="128"/>
    </location>
</feature>
<feature type="compositionally biased region" description="Polar residues" evidence="4">
    <location>
        <begin position="132"/>
        <end position="142"/>
    </location>
</feature>
<feature type="compositionally biased region" description="Basic and acidic residues" evidence="4">
    <location>
        <begin position="763"/>
        <end position="773"/>
    </location>
</feature>
<feature type="compositionally biased region" description="Basic and acidic residues" evidence="4">
    <location>
        <begin position="783"/>
        <end position="798"/>
    </location>
</feature>
<feature type="binding site" evidence="2">
    <location>
        <begin position="410"/>
        <end position="417"/>
    </location>
    <ligand>
        <name>ATP</name>
        <dbReference type="ChEBI" id="CHEBI:30616"/>
    </ligand>
</feature>
<proteinExistence type="inferred from homology"/>
<sequence>MDGFISNGPAEAPATMPPPEPFERPPTPPPPPPEDSAAPPPPPDTSAPPPPPEDAIPAPPLEKKKKAGWGAKRAAATPLSVEELVRKKREADAAAAKPKFLSRAERERLALEKRAKEVDADRRLKTERTANGADSSSAQSTPVYPERPNSDKRVIPTGPRAMRNTEAPARSGPAATRNKNYDMTPPAPPKPMSFSLTDSKGDSKRQAEEDETVAQVALIKQRYMGEEKTSNFSAKKKRKRTTDRKFNFEWNAEEDTSGDYNPLYQHRHEANFYGRGRLAGFGDDVADSLAKKYARALEDRDQEAGSIRAREMLEMEKRRREESTRNQLDKHWSEKKLEHMRERDWRIFKEDFNISTKGGSVPNPMRSWEESGLPKRLLELVDRVGYKEPTPIQRAAIPIALQSRDLIGVAVTGSGKTASFLLPLLVYIAELPRIDEFEWRKNDGPYAIVLAPTRELAQQIEIEAKKFTQPLGFNVVSIVGGHSLEEQAYSLRNGAEIIIATPGRLVDCIERRILVLSQCCYIIMDEADRMIDLGFEEPVNKILDALPVTNEKPDSDEAENSAAMRSHRYRQTMMYTATMPSAVERIARKYLRRPAIVTIGSAGEAVDTVEQRVELIAGEDKRKKRLADILSSGEFRPPIIVFVNIKRNCDAIAREIKHMGFSSVTLHGSKTQDQREAALASVRNGSTDVLVATDLAGRGIDVPDVSLVVNFNMATSIESYTHRIGRTGRAGKSGVAITFLGNEDADVMYDLKQMLMKSPISRVPEELRKHEAAQSKPTRGYAKKSDESSGFRDKGAWQ</sequence>
<evidence type="ECO:0000250" key="1"/>
<evidence type="ECO:0000255" key="2">
    <source>
        <dbReference type="PROSITE-ProRule" id="PRU00541"/>
    </source>
</evidence>
<evidence type="ECO:0000255" key="3">
    <source>
        <dbReference type="PROSITE-ProRule" id="PRU00542"/>
    </source>
</evidence>
<evidence type="ECO:0000256" key="4">
    <source>
        <dbReference type="SAM" id="MobiDB-lite"/>
    </source>
</evidence>
<evidence type="ECO:0000305" key="5"/>
<dbReference type="EC" id="3.6.4.13"/>
<dbReference type="EMBL" id="DS027054">
    <property type="protein sequence ID" value="EAW10368.1"/>
    <property type="molecule type" value="Genomic_DNA"/>
</dbReference>
<dbReference type="RefSeq" id="XP_001271794.1">
    <property type="nucleotide sequence ID" value="XM_001271793.1"/>
</dbReference>
<dbReference type="SMR" id="A1CHL3"/>
<dbReference type="STRING" id="344612.A1CHL3"/>
<dbReference type="EnsemblFungi" id="EAW10368">
    <property type="protein sequence ID" value="EAW10368"/>
    <property type="gene ID" value="ACLA_048380"/>
</dbReference>
<dbReference type="GeneID" id="4704103"/>
<dbReference type="KEGG" id="act:ACLA_048380"/>
<dbReference type="VEuPathDB" id="FungiDB:ACLA_048380"/>
<dbReference type="eggNOG" id="KOG0333">
    <property type="taxonomic scope" value="Eukaryota"/>
</dbReference>
<dbReference type="HOGENOM" id="CLU_003041_11_3_1"/>
<dbReference type="OMA" id="ARDIKHM"/>
<dbReference type="OrthoDB" id="196131at2759"/>
<dbReference type="Proteomes" id="UP000006701">
    <property type="component" value="Unassembled WGS sequence"/>
</dbReference>
<dbReference type="GO" id="GO:0005737">
    <property type="term" value="C:cytoplasm"/>
    <property type="evidence" value="ECO:0007669"/>
    <property type="project" value="UniProtKB-SubCell"/>
</dbReference>
<dbReference type="GO" id="GO:0005634">
    <property type="term" value="C:nucleus"/>
    <property type="evidence" value="ECO:0007669"/>
    <property type="project" value="UniProtKB-SubCell"/>
</dbReference>
<dbReference type="GO" id="GO:0005524">
    <property type="term" value="F:ATP binding"/>
    <property type="evidence" value="ECO:0007669"/>
    <property type="project" value="UniProtKB-KW"/>
</dbReference>
<dbReference type="GO" id="GO:0016887">
    <property type="term" value="F:ATP hydrolysis activity"/>
    <property type="evidence" value="ECO:0007669"/>
    <property type="project" value="RHEA"/>
</dbReference>
<dbReference type="GO" id="GO:0003676">
    <property type="term" value="F:nucleic acid binding"/>
    <property type="evidence" value="ECO:0007669"/>
    <property type="project" value="InterPro"/>
</dbReference>
<dbReference type="GO" id="GO:0003724">
    <property type="term" value="F:RNA helicase activity"/>
    <property type="evidence" value="ECO:0007669"/>
    <property type="project" value="UniProtKB-EC"/>
</dbReference>
<dbReference type="GO" id="GO:0006397">
    <property type="term" value="P:mRNA processing"/>
    <property type="evidence" value="ECO:0007669"/>
    <property type="project" value="UniProtKB-KW"/>
</dbReference>
<dbReference type="GO" id="GO:0008380">
    <property type="term" value="P:RNA splicing"/>
    <property type="evidence" value="ECO:0007669"/>
    <property type="project" value="UniProtKB-KW"/>
</dbReference>
<dbReference type="CDD" id="cd17945">
    <property type="entry name" value="DEADc_DDX23"/>
    <property type="match status" value="1"/>
</dbReference>
<dbReference type="CDD" id="cd18787">
    <property type="entry name" value="SF2_C_DEAD"/>
    <property type="match status" value="1"/>
</dbReference>
<dbReference type="FunFam" id="3.40.50.300:FF:000322">
    <property type="entry name" value="probable ATP-dependent RNA helicase DDX23"/>
    <property type="match status" value="1"/>
</dbReference>
<dbReference type="Gene3D" id="3.40.50.300">
    <property type="entry name" value="P-loop containing nucleotide triphosphate hydrolases"/>
    <property type="match status" value="2"/>
</dbReference>
<dbReference type="InterPro" id="IPR011545">
    <property type="entry name" value="DEAD/DEAH_box_helicase_dom"/>
</dbReference>
<dbReference type="InterPro" id="IPR014001">
    <property type="entry name" value="Helicase_ATP-bd"/>
</dbReference>
<dbReference type="InterPro" id="IPR001650">
    <property type="entry name" value="Helicase_C-like"/>
</dbReference>
<dbReference type="InterPro" id="IPR027417">
    <property type="entry name" value="P-loop_NTPase"/>
</dbReference>
<dbReference type="InterPro" id="IPR000629">
    <property type="entry name" value="RNA-helicase_DEAD-box_CS"/>
</dbReference>
<dbReference type="InterPro" id="IPR014014">
    <property type="entry name" value="RNA_helicase_DEAD_Q_motif"/>
</dbReference>
<dbReference type="PANTHER" id="PTHR47958">
    <property type="entry name" value="ATP-DEPENDENT RNA HELICASE DBP3"/>
    <property type="match status" value="1"/>
</dbReference>
<dbReference type="Pfam" id="PF25430">
    <property type="entry name" value="DDX23"/>
    <property type="match status" value="1"/>
</dbReference>
<dbReference type="Pfam" id="PF00270">
    <property type="entry name" value="DEAD"/>
    <property type="match status" value="1"/>
</dbReference>
<dbReference type="Pfam" id="PF00271">
    <property type="entry name" value="Helicase_C"/>
    <property type="match status" value="1"/>
</dbReference>
<dbReference type="SMART" id="SM00487">
    <property type="entry name" value="DEXDc"/>
    <property type="match status" value="1"/>
</dbReference>
<dbReference type="SMART" id="SM00490">
    <property type="entry name" value="HELICc"/>
    <property type="match status" value="1"/>
</dbReference>
<dbReference type="SUPFAM" id="SSF52540">
    <property type="entry name" value="P-loop containing nucleoside triphosphate hydrolases"/>
    <property type="match status" value="1"/>
</dbReference>
<dbReference type="PROSITE" id="PS00039">
    <property type="entry name" value="DEAD_ATP_HELICASE"/>
    <property type="match status" value="1"/>
</dbReference>
<dbReference type="PROSITE" id="PS51192">
    <property type="entry name" value="HELICASE_ATP_BIND_1"/>
    <property type="match status" value="1"/>
</dbReference>
<dbReference type="PROSITE" id="PS51194">
    <property type="entry name" value="HELICASE_CTER"/>
    <property type="match status" value="1"/>
</dbReference>
<dbReference type="PROSITE" id="PS51195">
    <property type="entry name" value="Q_MOTIF"/>
    <property type="match status" value="1"/>
</dbReference>
<keyword id="KW-0067">ATP-binding</keyword>
<keyword id="KW-0963">Cytoplasm</keyword>
<keyword id="KW-0347">Helicase</keyword>
<keyword id="KW-0378">Hydrolase</keyword>
<keyword id="KW-0507">mRNA processing</keyword>
<keyword id="KW-0508">mRNA splicing</keyword>
<keyword id="KW-0547">Nucleotide-binding</keyword>
<keyword id="KW-0539">Nucleus</keyword>
<keyword id="KW-1185">Reference proteome</keyword>
<accession>A1CHL3</accession>
<reference key="1">
    <citation type="journal article" date="2008" name="PLoS Genet.">
        <title>Genomic islands in the pathogenic filamentous fungus Aspergillus fumigatus.</title>
        <authorList>
            <person name="Fedorova N.D."/>
            <person name="Khaldi N."/>
            <person name="Joardar V.S."/>
            <person name="Maiti R."/>
            <person name="Amedeo P."/>
            <person name="Anderson M.J."/>
            <person name="Crabtree J."/>
            <person name="Silva J.C."/>
            <person name="Badger J.H."/>
            <person name="Albarraq A."/>
            <person name="Angiuoli S."/>
            <person name="Bussey H."/>
            <person name="Bowyer P."/>
            <person name="Cotty P.J."/>
            <person name="Dyer P.S."/>
            <person name="Egan A."/>
            <person name="Galens K."/>
            <person name="Fraser-Liggett C.M."/>
            <person name="Haas B.J."/>
            <person name="Inman J.M."/>
            <person name="Kent R."/>
            <person name="Lemieux S."/>
            <person name="Malavazi I."/>
            <person name="Orvis J."/>
            <person name="Roemer T."/>
            <person name="Ronning C.M."/>
            <person name="Sundaram J.P."/>
            <person name="Sutton G."/>
            <person name="Turner G."/>
            <person name="Venter J.C."/>
            <person name="White O.R."/>
            <person name="Whitty B.R."/>
            <person name="Youngman P."/>
            <person name="Wolfe K.H."/>
            <person name="Goldman G.H."/>
            <person name="Wortman J.R."/>
            <person name="Jiang B."/>
            <person name="Denning D.W."/>
            <person name="Nierman W.C."/>
        </authorList>
    </citation>
    <scope>NUCLEOTIDE SEQUENCE [LARGE SCALE GENOMIC DNA]</scope>
    <source>
        <strain>ATCC 1007 / CBS 513.65 / DSM 816 / NCTC 3887 / NRRL 1 / QM 1276 / 107</strain>
    </source>
</reference>
<name>PRP28_ASPCL</name>
<gene>
    <name type="primary">prp28</name>
    <name type="ORF">ACLA_048380</name>
</gene>
<comment type="function">
    <text evidence="1">ATP-dependent RNA helicase involved in mRNA splicing. May destabilize the U1/5'-splice site duplex to permit an effective competition for the 5'-splice site by the U6 snRNA, resulting in the switch between U1 and U6 at the 5'-splice site. May also act to unwind the U4/U6 base-pairing interaction in the U4/U6/U5 snRNP, facilitating the first covalent step of splicing (By similarity).</text>
</comment>
<comment type="catalytic activity">
    <reaction>
        <text>ATP + H2O = ADP + phosphate + H(+)</text>
        <dbReference type="Rhea" id="RHEA:13065"/>
        <dbReference type="ChEBI" id="CHEBI:15377"/>
        <dbReference type="ChEBI" id="CHEBI:15378"/>
        <dbReference type="ChEBI" id="CHEBI:30616"/>
        <dbReference type="ChEBI" id="CHEBI:43474"/>
        <dbReference type="ChEBI" id="CHEBI:456216"/>
        <dbReference type="EC" id="3.6.4.13"/>
    </reaction>
</comment>
<comment type="subunit">
    <text evidence="1">Component of the U5 snRNP complex.</text>
</comment>
<comment type="subcellular location">
    <subcellularLocation>
        <location evidence="1">Cytoplasm</location>
    </subcellularLocation>
    <subcellularLocation>
        <location evidence="1">Nucleus</location>
    </subcellularLocation>
</comment>
<comment type="domain">
    <text>The Q motif is unique to and characteristic of the DEAD box family of RNA helicases and controls ATP binding and hydrolysis.</text>
</comment>
<comment type="similarity">
    <text evidence="5">Belongs to the DEAD box helicase family. DDX23/PRP28 subfamily.</text>
</comment>
<organism>
    <name type="scientific">Aspergillus clavatus (strain ATCC 1007 / CBS 513.65 / DSM 816 / NCTC 3887 / NRRL 1 / QM 1276 / 107)</name>
    <dbReference type="NCBI Taxonomy" id="344612"/>
    <lineage>
        <taxon>Eukaryota</taxon>
        <taxon>Fungi</taxon>
        <taxon>Dikarya</taxon>
        <taxon>Ascomycota</taxon>
        <taxon>Pezizomycotina</taxon>
        <taxon>Eurotiomycetes</taxon>
        <taxon>Eurotiomycetidae</taxon>
        <taxon>Eurotiales</taxon>
        <taxon>Aspergillaceae</taxon>
        <taxon>Aspergillus</taxon>
        <taxon>Aspergillus subgen. Fumigati</taxon>
    </lineage>
</organism>
<protein>
    <recommendedName>
        <fullName>Pre-mRNA-splicing ATP-dependent RNA helicase prp28</fullName>
        <ecNumber>3.6.4.13</ecNumber>
    </recommendedName>
</protein>